<sequence length="222" mass="24662">MELTLHEARVIGCLLEKEVTTPEQYPLSLNALTLACNQKTSRDPVLDLSEALVQDALDSLNKKRLISEQSGFGSRVVKYKHRFCNTEFSELQLSSAAVAIICLLLLRGPQTPGELRTRSNRLHDFKDVLEVEACIKQLMERDKPVLAQLPREPGKRECRYAELFSQGAEQINAASLSADSPSAGSNSLNAQDRQQLEARVTQLEEQVAELKDKLDSLIASLS</sequence>
<gene>
    <name type="ordered locus">Shewmr4_1554</name>
</gene>
<reference key="1">
    <citation type="submission" date="2006-08" db="EMBL/GenBank/DDBJ databases">
        <title>Complete sequence of Shewanella sp. MR-4.</title>
        <authorList>
            <consortium name="US DOE Joint Genome Institute"/>
            <person name="Copeland A."/>
            <person name="Lucas S."/>
            <person name="Lapidus A."/>
            <person name="Barry K."/>
            <person name="Detter J.C."/>
            <person name="Glavina del Rio T."/>
            <person name="Hammon N."/>
            <person name="Israni S."/>
            <person name="Dalin E."/>
            <person name="Tice H."/>
            <person name="Pitluck S."/>
            <person name="Kiss H."/>
            <person name="Brettin T."/>
            <person name="Bruce D."/>
            <person name="Han C."/>
            <person name="Tapia R."/>
            <person name="Gilna P."/>
            <person name="Schmutz J."/>
            <person name="Larimer F."/>
            <person name="Land M."/>
            <person name="Hauser L."/>
            <person name="Kyrpides N."/>
            <person name="Mikhailova N."/>
            <person name="Nealson K."/>
            <person name="Konstantinidis K."/>
            <person name="Klappenbach J."/>
            <person name="Tiedje J."/>
            <person name="Richardson P."/>
        </authorList>
    </citation>
    <scope>NUCLEOTIDE SEQUENCE [LARGE SCALE GENOMIC DNA]</scope>
    <source>
        <strain>MR-4</strain>
    </source>
</reference>
<name>Y1554_SHESM</name>
<evidence type="ECO:0000255" key="1">
    <source>
        <dbReference type="HAMAP-Rule" id="MF_01584"/>
    </source>
</evidence>
<evidence type="ECO:0000256" key="2">
    <source>
        <dbReference type="SAM" id="MobiDB-lite"/>
    </source>
</evidence>
<organism>
    <name type="scientific">Shewanella sp. (strain MR-4)</name>
    <dbReference type="NCBI Taxonomy" id="60480"/>
    <lineage>
        <taxon>Bacteria</taxon>
        <taxon>Pseudomonadati</taxon>
        <taxon>Pseudomonadota</taxon>
        <taxon>Gammaproteobacteria</taxon>
        <taxon>Alteromonadales</taxon>
        <taxon>Shewanellaceae</taxon>
        <taxon>Shewanella</taxon>
    </lineage>
</organism>
<feature type="chain" id="PRO_0000309429" description="UPF0502 protein Shewmr4_1554">
    <location>
        <begin position="1"/>
        <end position="222"/>
    </location>
</feature>
<feature type="region of interest" description="Disordered" evidence="2">
    <location>
        <begin position="175"/>
        <end position="194"/>
    </location>
</feature>
<feature type="compositionally biased region" description="Polar residues" evidence="2">
    <location>
        <begin position="175"/>
        <end position="193"/>
    </location>
</feature>
<dbReference type="EMBL" id="CP000446">
    <property type="protein sequence ID" value="ABI38632.1"/>
    <property type="molecule type" value="Genomic_DNA"/>
</dbReference>
<dbReference type="RefSeq" id="WP_011622335.1">
    <property type="nucleotide sequence ID" value="NC_008321.1"/>
</dbReference>
<dbReference type="SMR" id="Q0HJY5"/>
<dbReference type="KEGG" id="she:Shewmr4_1554"/>
<dbReference type="HOGENOM" id="CLU_057831_2_0_6"/>
<dbReference type="Gene3D" id="1.10.10.10">
    <property type="entry name" value="Winged helix-like DNA-binding domain superfamily/Winged helix DNA-binding domain"/>
    <property type="match status" value="2"/>
</dbReference>
<dbReference type="HAMAP" id="MF_01584">
    <property type="entry name" value="UPF0502"/>
    <property type="match status" value="1"/>
</dbReference>
<dbReference type="InterPro" id="IPR007432">
    <property type="entry name" value="DUF480"/>
</dbReference>
<dbReference type="InterPro" id="IPR036388">
    <property type="entry name" value="WH-like_DNA-bd_sf"/>
</dbReference>
<dbReference type="InterPro" id="IPR036390">
    <property type="entry name" value="WH_DNA-bd_sf"/>
</dbReference>
<dbReference type="PANTHER" id="PTHR38768">
    <property type="entry name" value="UPF0502 PROTEIN YCEH"/>
    <property type="match status" value="1"/>
</dbReference>
<dbReference type="PANTHER" id="PTHR38768:SF1">
    <property type="entry name" value="UPF0502 PROTEIN YCEH"/>
    <property type="match status" value="1"/>
</dbReference>
<dbReference type="Pfam" id="PF04337">
    <property type="entry name" value="DUF480"/>
    <property type="match status" value="1"/>
</dbReference>
<dbReference type="SUPFAM" id="SSF46785">
    <property type="entry name" value="Winged helix' DNA-binding domain"/>
    <property type="match status" value="2"/>
</dbReference>
<accession>Q0HJY5</accession>
<protein>
    <recommendedName>
        <fullName evidence="1">UPF0502 protein Shewmr4_1554</fullName>
    </recommendedName>
</protein>
<comment type="similarity">
    <text evidence="1">Belongs to the UPF0502 family.</text>
</comment>
<proteinExistence type="inferred from homology"/>